<organism>
    <name type="scientific">Mastigocladus laminosus</name>
    <name type="common">Fischerella sp.</name>
    <dbReference type="NCBI Taxonomy" id="83541"/>
    <lineage>
        <taxon>Bacteria</taxon>
        <taxon>Bacillati</taxon>
        <taxon>Cyanobacteriota</taxon>
        <taxon>Cyanophyceae</taxon>
        <taxon>Nostocales</taxon>
        <taxon>Hapalosiphonaceae</taxon>
        <taxon>Mastigocladus</taxon>
    </lineage>
</organism>
<reference key="1">
    <citation type="journal article" date="2000" name="Indian J. Biochem. Biophys.">
        <title>An insight into the assembly and organization of photosystem I complex in the thylakoid membranes of the thermophilic cyanobacterium, Mastigocladus laminosus.</title>
        <authorList>
            <person name="Lushy A."/>
            <person name="He Z.-Y."/>
            <person name="Fish A."/>
            <person name="Darash-Yahana M."/>
            <person name="Minai L."/>
            <person name="Verchovsky L."/>
            <person name="Michaeli D."/>
            <person name="Nechushtai R."/>
        </authorList>
    </citation>
    <scope>NUCLEOTIDE SEQUENCE [GENOMIC DNA]</scope>
    <source>
        <strain>PCC 7605</strain>
    </source>
</reference>
<feature type="chain" id="PRO_0000141455" description="4-hydroxy-tetrahydrodipicolinate reductase">
    <location>
        <begin position="1"/>
        <end position="278"/>
    </location>
</feature>
<feature type="active site" description="Proton donor/acceptor" evidence="1">
    <location>
        <position position="167"/>
    </location>
</feature>
<feature type="active site" description="Proton donor" evidence="1">
    <location>
        <position position="171"/>
    </location>
</feature>
<feature type="binding site" evidence="1">
    <location>
        <begin position="13"/>
        <end position="18"/>
    </location>
    <ligand>
        <name>NAD(+)</name>
        <dbReference type="ChEBI" id="CHEBI:57540"/>
    </ligand>
</feature>
<feature type="binding site" evidence="1">
    <location>
        <begin position="111"/>
        <end position="113"/>
    </location>
    <ligand>
        <name>NAD(+)</name>
        <dbReference type="ChEBI" id="CHEBI:57540"/>
    </ligand>
</feature>
<feature type="binding site" evidence="1">
    <location>
        <position position="168"/>
    </location>
    <ligand>
        <name>(S)-2,3,4,5-tetrahydrodipicolinate</name>
        <dbReference type="ChEBI" id="CHEBI:16845"/>
    </ligand>
</feature>
<feature type="binding site" evidence="1">
    <location>
        <begin position="177"/>
        <end position="178"/>
    </location>
    <ligand>
        <name>(S)-2,3,4,5-tetrahydrodipicolinate</name>
        <dbReference type="ChEBI" id="CHEBI:16845"/>
    </ligand>
</feature>
<sequence length="278" mass="29743">MANQTPIPVIVNGAAGKMGRETIKAVVQAADMTLMGAVDTNPEYQGKDAGEVAGLNEPTEVPITDQLEPILAYVAGERHLQPGVMVDFTHPDAVYDNVRSAIAYGIRPVVGTTGLSSKQIEQLADFAEKASTGCLIIPNFSIGMVLLQQAAIAASQYFDHVEIIELHHNQKADAPSGTAIQTAQMLAEMGKTFNQPAVKETEKLPGARGSLAGEGIRIHSVRLPGLIAHQEVIFGAPGQIYTLRHDTSDRTAYMPGVLLAIRKVLQLKSLVYGLEKIL</sequence>
<gene>
    <name evidence="1" type="primary">dapB</name>
</gene>
<protein>
    <recommendedName>
        <fullName evidence="1">4-hydroxy-tetrahydrodipicolinate reductase</fullName>
        <shortName evidence="1">HTPA reductase</shortName>
        <ecNumber evidence="1">1.17.1.8</ecNumber>
    </recommendedName>
</protein>
<proteinExistence type="inferred from homology"/>
<keyword id="KW-0028">Amino-acid biosynthesis</keyword>
<keyword id="KW-0963">Cytoplasm</keyword>
<keyword id="KW-0220">Diaminopimelate biosynthesis</keyword>
<keyword id="KW-0457">Lysine biosynthesis</keyword>
<keyword id="KW-0520">NAD</keyword>
<keyword id="KW-0521">NADP</keyword>
<keyword id="KW-0560">Oxidoreductase</keyword>
<dbReference type="EC" id="1.17.1.8" evidence="1"/>
<dbReference type="EMBL" id="AF170923">
    <property type="protein sequence ID" value="AAD50999.1"/>
    <property type="molecule type" value="Genomic_DNA"/>
</dbReference>
<dbReference type="SMR" id="Q9S3W8"/>
<dbReference type="UniPathway" id="UPA00034">
    <property type="reaction ID" value="UER00018"/>
</dbReference>
<dbReference type="GO" id="GO:0005829">
    <property type="term" value="C:cytosol"/>
    <property type="evidence" value="ECO:0007669"/>
    <property type="project" value="TreeGrafter"/>
</dbReference>
<dbReference type="GO" id="GO:0008839">
    <property type="term" value="F:4-hydroxy-tetrahydrodipicolinate reductase"/>
    <property type="evidence" value="ECO:0007669"/>
    <property type="project" value="UniProtKB-EC"/>
</dbReference>
<dbReference type="GO" id="GO:0051287">
    <property type="term" value="F:NAD binding"/>
    <property type="evidence" value="ECO:0007669"/>
    <property type="project" value="UniProtKB-UniRule"/>
</dbReference>
<dbReference type="GO" id="GO:0050661">
    <property type="term" value="F:NADP binding"/>
    <property type="evidence" value="ECO:0007669"/>
    <property type="project" value="UniProtKB-UniRule"/>
</dbReference>
<dbReference type="GO" id="GO:0016726">
    <property type="term" value="F:oxidoreductase activity, acting on CH or CH2 groups, NAD or NADP as acceptor"/>
    <property type="evidence" value="ECO:0007669"/>
    <property type="project" value="UniProtKB-UniRule"/>
</dbReference>
<dbReference type="GO" id="GO:0019877">
    <property type="term" value="P:diaminopimelate biosynthetic process"/>
    <property type="evidence" value="ECO:0007669"/>
    <property type="project" value="UniProtKB-UniRule"/>
</dbReference>
<dbReference type="GO" id="GO:0009089">
    <property type="term" value="P:lysine biosynthetic process via diaminopimelate"/>
    <property type="evidence" value="ECO:0007669"/>
    <property type="project" value="UniProtKB-UniRule"/>
</dbReference>
<dbReference type="CDD" id="cd02274">
    <property type="entry name" value="DHDPR_N"/>
    <property type="match status" value="1"/>
</dbReference>
<dbReference type="FunFam" id="3.30.360.10:FF:000009">
    <property type="entry name" value="4-hydroxy-tetrahydrodipicolinate reductase"/>
    <property type="match status" value="1"/>
</dbReference>
<dbReference type="Gene3D" id="3.30.360.10">
    <property type="entry name" value="Dihydrodipicolinate Reductase, domain 2"/>
    <property type="match status" value="1"/>
</dbReference>
<dbReference type="Gene3D" id="3.40.50.720">
    <property type="entry name" value="NAD(P)-binding Rossmann-like Domain"/>
    <property type="match status" value="1"/>
</dbReference>
<dbReference type="HAMAP" id="MF_00102">
    <property type="entry name" value="DapB"/>
    <property type="match status" value="1"/>
</dbReference>
<dbReference type="InterPro" id="IPR022663">
    <property type="entry name" value="DapB_C"/>
</dbReference>
<dbReference type="InterPro" id="IPR000846">
    <property type="entry name" value="DapB_N"/>
</dbReference>
<dbReference type="InterPro" id="IPR022664">
    <property type="entry name" value="DapB_N_CS"/>
</dbReference>
<dbReference type="InterPro" id="IPR023940">
    <property type="entry name" value="DHDPR_bac"/>
</dbReference>
<dbReference type="InterPro" id="IPR036291">
    <property type="entry name" value="NAD(P)-bd_dom_sf"/>
</dbReference>
<dbReference type="NCBIfam" id="TIGR00036">
    <property type="entry name" value="dapB"/>
    <property type="match status" value="1"/>
</dbReference>
<dbReference type="PANTHER" id="PTHR20836:SF0">
    <property type="entry name" value="4-HYDROXY-TETRAHYDRODIPICOLINATE REDUCTASE 1, CHLOROPLASTIC-RELATED"/>
    <property type="match status" value="1"/>
</dbReference>
<dbReference type="PANTHER" id="PTHR20836">
    <property type="entry name" value="DIHYDRODIPICOLINATE REDUCTASE"/>
    <property type="match status" value="1"/>
</dbReference>
<dbReference type="Pfam" id="PF05173">
    <property type="entry name" value="DapB_C"/>
    <property type="match status" value="1"/>
</dbReference>
<dbReference type="Pfam" id="PF01113">
    <property type="entry name" value="DapB_N"/>
    <property type="match status" value="1"/>
</dbReference>
<dbReference type="PIRSF" id="PIRSF000161">
    <property type="entry name" value="DHPR"/>
    <property type="match status" value="1"/>
</dbReference>
<dbReference type="SUPFAM" id="SSF55347">
    <property type="entry name" value="Glyceraldehyde-3-phosphate dehydrogenase-like, C-terminal domain"/>
    <property type="match status" value="1"/>
</dbReference>
<dbReference type="SUPFAM" id="SSF51735">
    <property type="entry name" value="NAD(P)-binding Rossmann-fold domains"/>
    <property type="match status" value="1"/>
</dbReference>
<dbReference type="PROSITE" id="PS01298">
    <property type="entry name" value="DAPB"/>
    <property type="match status" value="1"/>
</dbReference>
<name>DAPB_MASLA</name>
<accession>Q9S3W8</accession>
<evidence type="ECO:0000255" key="1">
    <source>
        <dbReference type="HAMAP-Rule" id="MF_00102"/>
    </source>
</evidence>
<evidence type="ECO:0000305" key="2"/>
<comment type="function">
    <text evidence="1">Catalyzes the conversion of 4-hydroxy-tetrahydrodipicolinate (HTPA) to tetrahydrodipicolinate.</text>
</comment>
<comment type="catalytic activity">
    <reaction evidence="1">
        <text>(S)-2,3,4,5-tetrahydrodipicolinate + NAD(+) + H2O = (2S,4S)-4-hydroxy-2,3,4,5-tetrahydrodipicolinate + NADH + H(+)</text>
        <dbReference type="Rhea" id="RHEA:35323"/>
        <dbReference type="ChEBI" id="CHEBI:15377"/>
        <dbReference type="ChEBI" id="CHEBI:15378"/>
        <dbReference type="ChEBI" id="CHEBI:16845"/>
        <dbReference type="ChEBI" id="CHEBI:57540"/>
        <dbReference type="ChEBI" id="CHEBI:57945"/>
        <dbReference type="ChEBI" id="CHEBI:67139"/>
        <dbReference type="EC" id="1.17.1.8"/>
    </reaction>
</comment>
<comment type="catalytic activity">
    <reaction evidence="1">
        <text>(S)-2,3,4,5-tetrahydrodipicolinate + NADP(+) + H2O = (2S,4S)-4-hydroxy-2,3,4,5-tetrahydrodipicolinate + NADPH + H(+)</text>
        <dbReference type="Rhea" id="RHEA:35331"/>
        <dbReference type="ChEBI" id="CHEBI:15377"/>
        <dbReference type="ChEBI" id="CHEBI:15378"/>
        <dbReference type="ChEBI" id="CHEBI:16845"/>
        <dbReference type="ChEBI" id="CHEBI:57783"/>
        <dbReference type="ChEBI" id="CHEBI:58349"/>
        <dbReference type="ChEBI" id="CHEBI:67139"/>
        <dbReference type="EC" id="1.17.1.8"/>
    </reaction>
</comment>
<comment type="pathway">
    <text evidence="1">Amino-acid biosynthesis; L-lysine biosynthesis via DAP pathway; (S)-tetrahydrodipicolinate from L-aspartate: step 4/4.</text>
</comment>
<comment type="subcellular location">
    <subcellularLocation>
        <location evidence="1">Cytoplasm</location>
    </subcellularLocation>
</comment>
<comment type="similarity">
    <text evidence="1">Belongs to the DapB family.</text>
</comment>
<comment type="caution">
    <text evidence="2">Was originally thought to be a dihydrodipicolinate reductase (DHDPR), catalyzing the conversion of dihydrodipicolinate to tetrahydrodipicolinate. However, it was shown in E.coli that the substrate of the enzymatic reaction is not dihydrodipicolinate (DHDP) but in fact (2S,4S)-4-hydroxy-2,3,4,5-tetrahydrodipicolinic acid (HTPA), the product released by the DapA-catalyzed reaction.</text>
</comment>